<feature type="chain" id="PRO_0000407309" description="tRNA (adenine(58)-N(1))-methyltransferase TrmI">
    <location>
        <begin position="1"/>
        <end position="280"/>
    </location>
</feature>
<feature type="binding site">
    <location>
        <begin position="110"/>
        <end position="113"/>
    </location>
    <ligand>
        <name>S-adenosyl-L-methionine</name>
        <dbReference type="ChEBI" id="CHEBI:59789"/>
    </ligand>
</feature>
<feature type="binding site" evidence="1 2">
    <location>
        <position position="131"/>
    </location>
    <ligand>
        <name>S-adenosyl-L-methionine</name>
        <dbReference type="ChEBI" id="CHEBI:59789"/>
    </ligand>
</feature>
<feature type="binding site" evidence="1 2">
    <location>
        <position position="136"/>
    </location>
    <ligand>
        <name>S-adenosyl-L-methionine</name>
        <dbReference type="ChEBI" id="CHEBI:59789"/>
    </ligand>
</feature>
<feature type="binding site" evidence="1 2">
    <location>
        <position position="161"/>
    </location>
    <ligand>
        <name>S-adenosyl-L-methionine</name>
        <dbReference type="ChEBI" id="CHEBI:59789"/>
    </ligand>
</feature>
<feature type="binding site" evidence="1 2">
    <location>
        <position position="178"/>
    </location>
    <ligand>
        <name>S-adenosyl-L-methionine</name>
        <dbReference type="ChEBI" id="CHEBI:59789"/>
    </ligand>
</feature>
<feature type="strand" evidence="4">
    <location>
        <begin position="12"/>
        <end position="17"/>
    </location>
</feature>
<feature type="strand" evidence="4">
    <location>
        <begin position="22"/>
        <end position="26"/>
    </location>
</feature>
<feature type="strand" evidence="4">
    <location>
        <begin position="32"/>
        <end position="35"/>
    </location>
</feature>
<feature type="strand" evidence="4">
    <location>
        <begin position="38"/>
        <end position="41"/>
    </location>
</feature>
<feature type="helix" evidence="4">
    <location>
        <begin position="42"/>
        <end position="45"/>
    </location>
</feature>
<feature type="strand" evidence="4">
    <location>
        <begin position="52"/>
        <end position="55"/>
    </location>
</feature>
<feature type="strand" evidence="4">
    <location>
        <begin position="61"/>
        <end position="65"/>
    </location>
</feature>
<feature type="helix" evidence="4">
    <location>
        <begin position="69"/>
        <end position="73"/>
    </location>
</feature>
<feature type="helix" evidence="4">
    <location>
        <begin position="85"/>
        <end position="94"/>
    </location>
</feature>
<feature type="strand" evidence="4">
    <location>
        <begin position="102"/>
        <end position="106"/>
    </location>
</feature>
<feature type="helix" evidence="4">
    <location>
        <begin position="112"/>
        <end position="121"/>
    </location>
</feature>
<feature type="strand" evidence="4">
    <location>
        <begin position="125"/>
        <end position="130"/>
    </location>
</feature>
<feature type="helix" evidence="4">
    <location>
        <begin position="134"/>
        <end position="148"/>
    </location>
</feature>
<feature type="strand" evidence="4">
    <location>
        <begin position="155"/>
        <end position="158"/>
    </location>
</feature>
<feature type="helix" evidence="4">
    <location>
        <begin position="162"/>
        <end position="164"/>
    </location>
</feature>
<feature type="strand" evidence="4">
    <location>
        <begin position="172"/>
        <end position="180"/>
    </location>
</feature>
<feature type="helix" evidence="4">
    <location>
        <begin position="182"/>
        <end position="185"/>
    </location>
</feature>
<feature type="helix" evidence="4">
    <location>
        <begin position="186"/>
        <end position="192"/>
    </location>
</feature>
<feature type="strand" evidence="4">
    <location>
        <begin position="193"/>
        <end position="205"/>
    </location>
</feature>
<feature type="helix" evidence="4">
    <location>
        <begin position="206"/>
        <end position="219"/>
    </location>
</feature>
<feature type="strand" evidence="4">
    <location>
        <begin position="220"/>
        <end position="222"/>
    </location>
</feature>
<feature type="strand" evidence="4">
    <location>
        <begin position="226"/>
        <end position="228"/>
    </location>
</feature>
<feature type="strand" evidence="4">
    <location>
        <begin position="235"/>
        <end position="238"/>
    </location>
</feature>
<feature type="strand" evidence="4">
    <location>
        <begin position="241"/>
        <end position="244"/>
    </location>
</feature>
<feature type="strand" evidence="4">
    <location>
        <begin position="254"/>
        <end position="260"/>
    </location>
</feature>
<organism>
    <name type="scientific">Mycobacterium tuberculosis (strain ATCC 25618 / H37Rv)</name>
    <dbReference type="NCBI Taxonomy" id="83332"/>
    <lineage>
        <taxon>Bacteria</taxon>
        <taxon>Bacillati</taxon>
        <taxon>Actinomycetota</taxon>
        <taxon>Actinomycetes</taxon>
        <taxon>Mycobacteriales</taxon>
        <taxon>Mycobacteriaceae</taxon>
        <taxon>Mycobacterium</taxon>
        <taxon>Mycobacterium tuberculosis complex</taxon>
    </lineage>
</organism>
<keyword id="KW-0002">3D-structure</keyword>
<keyword id="KW-0489">Methyltransferase</keyword>
<keyword id="KW-1185">Reference proteome</keyword>
<keyword id="KW-0949">S-adenosyl-L-methionine</keyword>
<keyword id="KW-0808">Transferase</keyword>
<keyword id="KW-0819">tRNA processing</keyword>
<evidence type="ECO:0000255" key="1">
    <source>
        <dbReference type="PROSITE-ProRule" id="PRU00952"/>
    </source>
</evidence>
<evidence type="ECO:0000269" key="2">
    <source>
    </source>
</evidence>
<evidence type="ECO:0000269" key="3">
    <source>
    </source>
</evidence>
<evidence type="ECO:0007829" key="4">
    <source>
        <dbReference type="PDB" id="1I9G"/>
    </source>
</evidence>
<sequence length="280" mass="30123">MSATGPFSIGERVQLTDAKGRRYTMSLTPGAEFHTHRGSIAHDAVIGLEQGSVVKSSNGALFLVLRPLLVDYVMSMPRGPQVIYPKDAAQIVHEGDIFPGARVLEAGAGSGALTLSLLRAVGPAGQVISYEQRADHAEHARRNVSGCYGQPPDNWRLVVSDLADSELPDGSVDRAVLDMLAPWEVLDAVSRLLVAGGVLMVYVATVTQLSRIVEALRAKQCWTEPRAWETLQRGWNVVGLAVRPQHSMRGHTAFLVATRRLAPGAVAPAPLGRKREGRDG</sequence>
<comment type="function">
    <text evidence="3">Catalyzes the S-adenosyl-L-methionine-dependent formation of N(1)-methyladenine at position 58 (m1A58) in tRNA.</text>
</comment>
<comment type="catalytic activity">
    <reaction evidence="1 3">
        <text>adenosine(58) in tRNA + S-adenosyl-L-methionine = N(1)-methyladenosine(58) in tRNA + S-adenosyl-L-homocysteine + H(+)</text>
        <dbReference type="Rhea" id="RHEA:43152"/>
        <dbReference type="Rhea" id="RHEA-COMP:10365"/>
        <dbReference type="Rhea" id="RHEA-COMP:10366"/>
        <dbReference type="ChEBI" id="CHEBI:15378"/>
        <dbReference type="ChEBI" id="CHEBI:57856"/>
        <dbReference type="ChEBI" id="CHEBI:59789"/>
        <dbReference type="ChEBI" id="CHEBI:74411"/>
        <dbReference type="ChEBI" id="CHEBI:74491"/>
        <dbReference type="EC" id="2.1.1.220"/>
    </reaction>
</comment>
<comment type="activity regulation">
    <text evidence="3">Inhibited by Mg(2+).</text>
</comment>
<comment type="subunit">
    <text evidence="2 3">Homotetramer composed of a dimer of dimers.</text>
</comment>
<comment type="domain">
    <text evidence="2">Contains a large catalytic C-terminal domain that binds S-adenosyl-L-methionine and a smaller N-terminal domain that may play a role in tRNA recognition. Domains are connected by a linker region.</text>
</comment>
<comment type="similarity">
    <text evidence="1">Belongs to the class I-like SAM-binding methyltransferase superfamily. TRM61 family.</text>
</comment>
<reference key="1">
    <citation type="journal article" date="1998" name="Nature">
        <title>Deciphering the biology of Mycobacterium tuberculosis from the complete genome sequence.</title>
        <authorList>
            <person name="Cole S.T."/>
            <person name="Brosch R."/>
            <person name="Parkhill J."/>
            <person name="Garnier T."/>
            <person name="Churcher C.M."/>
            <person name="Harris D.E."/>
            <person name="Gordon S.V."/>
            <person name="Eiglmeier K."/>
            <person name="Gas S."/>
            <person name="Barry C.E. III"/>
            <person name="Tekaia F."/>
            <person name="Badcock K."/>
            <person name="Basham D."/>
            <person name="Brown D."/>
            <person name="Chillingworth T."/>
            <person name="Connor R."/>
            <person name="Davies R.M."/>
            <person name="Devlin K."/>
            <person name="Feltwell T."/>
            <person name="Gentles S."/>
            <person name="Hamlin N."/>
            <person name="Holroyd S."/>
            <person name="Hornsby T."/>
            <person name="Jagels K."/>
            <person name="Krogh A."/>
            <person name="McLean J."/>
            <person name="Moule S."/>
            <person name="Murphy L.D."/>
            <person name="Oliver S."/>
            <person name="Osborne J."/>
            <person name="Quail M.A."/>
            <person name="Rajandream M.A."/>
            <person name="Rogers J."/>
            <person name="Rutter S."/>
            <person name="Seeger K."/>
            <person name="Skelton S."/>
            <person name="Squares S."/>
            <person name="Squares R."/>
            <person name="Sulston J.E."/>
            <person name="Taylor K."/>
            <person name="Whitehead S."/>
            <person name="Barrell B.G."/>
        </authorList>
    </citation>
    <scope>NUCLEOTIDE SEQUENCE [LARGE SCALE GENOMIC DNA]</scope>
    <source>
        <strain>ATCC 25618 / H37Rv</strain>
    </source>
</reference>
<reference key="2">
    <citation type="journal article" date="2004" name="Nucleic Acids Res.">
        <title>Mycobacterium tuberculosis Rv2118c codes for a single-component homotetrameric m1A58 tRNA methyltransferase.</title>
        <authorList>
            <person name="Varshney U."/>
            <person name="Ramesh V."/>
            <person name="Madabushi A."/>
            <person name="Gaur R."/>
            <person name="Subramanya H.S."/>
            <person name="RajBhandary U.L."/>
        </authorList>
    </citation>
    <scope>FUNCTION</scope>
    <scope>CATALYTIC ACTIVITY</scope>
    <scope>ACTIVITY REGULATION</scope>
    <scope>SUBUNIT</scope>
    <source>
        <strain>ATCC 25618 / H37Rv</strain>
    </source>
</reference>
<reference key="3">
    <citation type="journal article" date="2011" name="Mol. Cell. Proteomics">
        <title>Proteogenomic analysis of Mycobacterium tuberculosis by high resolution mass spectrometry.</title>
        <authorList>
            <person name="Kelkar D.S."/>
            <person name="Kumar D."/>
            <person name="Kumar P."/>
            <person name="Balakrishnan L."/>
            <person name="Muthusamy B."/>
            <person name="Yadav A.K."/>
            <person name="Shrivastava P."/>
            <person name="Marimuthu A."/>
            <person name="Anand S."/>
            <person name="Sundaram H."/>
            <person name="Kingsbury R."/>
            <person name="Harsha H.C."/>
            <person name="Nair B."/>
            <person name="Prasad T.S."/>
            <person name="Chauhan D.S."/>
            <person name="Katoch K."/>
            <person name="Katoch V.M."/>
            <person name="Kumar P."/>
            <person name="Chaerkady R."/>
            <person name="Ramachandran S."/>
            <person name="Dash D."/>
            <person name="Pandey A."/>
        </authorList>
    </citation>
    <scope>IDENTIFICATION BY MASS SPECTROMETRY [LARGE SCALE ANALYSIS]</scope>
    <source>
        <strain>ATCC 25618 / H37Rv</strain>
    </source>
</reference>
<reference key="4">
    <citation type="journal article" date="2001" name="J. Mol. Biol.">
        <title>Crystal structure of Rv2118c: an AdoMet-dependent methyltransferase from Mycobacterium tuberculosis H37Rv.</title>
        <authorList>
            <person name="Gupta A."/>
            <person name="Kumar P.H."/>
            <person name="Dineshkumar T.K."/>
            <person name="Varshney U."/>
            <person name="Subramanya H.S."/>
        </authorList>
    </citation>
    <scope>X-RAY CRYSTALLOGRAPHY (1.98 ANGSTROMS) IN COMPLEX WITH S-ADENOSYL-L-METHIONINE</scope>
    <scope>SUBUNIT</scope>
    <scope>DOMAIN</scope>
</reference>
<name>TRMI_MYCTU</name>
<dbReference type="EC" id="2.1.1.220"/>
<dbReference type="EMBL" id="AL123456">
    <property type="protein sequence ID" value="CCP44893.1"/>
    <property type="molecule type" value="Genomic_DNA"/>
</dbReference>
<dbReference type="PIR" id="A70513">
    <property type="entry name" value="A70513"/>
</dbReference>
<dbReference type="RefSeq" id="NP_216634.1">
    <property type="nucleotide sequence ID" value="NC_000962.3"/>
</dbReference>
<dbReference type="RefSeq" id="WP_003411041.1">
    <property type="nucleotide sequence ID" value="NZ_NVQJ01000058.1"/>
</dbReference>
<dbReference type="PDB" id="1I9G">
    <property type="method" value="X-ray"/>
    <property type="resolution" value="1.98 A"/>
    <property type="chains" value="A=1-280"/>
</dbReference>
<dbReference type="PDBsum" id="1I9G"/>
<dbReference type="SMR" id="P9WFZ1"/>
<dbReference type="FunCoup" id="P9WFZ1">
    <property type="interactions" value="109"/>
</dbReference>
<dbReference type="STRING" id="83332.Rv2118c"/>
<dbReference type="PaxDb" id="83332-Rv2118c"/>
<dbReference type="DNASU" id="887374"/>
<dbReference type="GeneID" id="45426093"/>
<dbReference type="GeneID" id="887374"/>
<dbReference type="KEGG" id="mtu:Rv2118c"/>
<dbReference type="KEGG" id="mtv:RVBD_2118c"/>
<dbReference type="TubercuList" id="Rv2118c"/>
<dbReference type="eggNOG" id="COG2519">
    <property type="taxonomic scope" value="Bacteria"/>
</dbReference>
<dbReference type="InParanoid" id="P9WFZ1"/>
<dbReference type="OrthoDB" id="9781391at2"/>
<dbReference type="PhylomeDB" id="P9WFZ1"/>
<dbReference type="BRENDA" id="2.1.1.220">
    <property type="organism ID" value="3445"/>
</dbReference>
<dbReference type="EvolutionaryTrace" id="P9WFZ1"/>
<dbReference type="Proteomes" id="UP000001584">
    <property type="component" value="Chromosome"/>
</dbReference>
<dbReference type="GO" id="GO:0005886">
    <property type="term" value="C:plasma membrane"/>
    <property type="evidence" value="ECO:0007005"/>
    <property type="project" value="MTBBASE"/>
</dbReference>
<dbReference type="GO" id="GO:0031515">
    <property type="term" value="C:tRNA (m1A) methyltransferase complex"/>
    <property type="evidence" value="ECO:0000318"/>
    <property type="project" value="GO_Central"/>
</dbReference>
<dbReference type="GO" id="GO:0160107">
    <property type="term" value="F:tRNA (adenine(58)-N1)-methyltransferase activity"/>
    <property type="evidence" value="ECO:0000314"/>
    <property type="project" value="GO_Central"/>
</dbReference>
<dbReference type="GO" id="GO:0030488">
    <property type="term" value="P:tRNA methylation"/>
    <property type="evidence" value="ECO:0000318"/>
    <property type="project" value="GO_Central"/>
</dbReference>
<dbReference type="GO" id="GO:0008033">
    <property type="term" value="P:tRNA processing"/>
    <property type="evidence" value="ECO:0000314"/>
    <property type="project" value="GO_Central"/>
</dbReference>
<dbReference type="CDD" id="cd02440">
    <property type="entry name" value="AdoMet_MTases"/>
    <property type="match status" value="1"/>
</dbReference>
<dbReference type="FunFam" id="3.10.330.20:FF:000001">
    <property type="entry name" value="tRNA (adenine(58)-N(1))-methyltransferase TrmI"/>
    <property type="match status" value="1"/>
</dbReference>
<dbReference type="FunFam" id="3.40.50.150:FF:000019">
    <property type="entry name" value="tRNA (adenine(58)-N(1))-methyltransferase TrmI"/>
    <property type="match status" value="1"/>
</dbReference>
<dbReference type="Gene3D" id="3.10.330.20">
    <property type="match status" value="1"/>
</dbReference>
<dbReference type="Gene3D" id="3.40.50.150">
    <property type="entry name" value="Vaccinia Virus protein VP39"/>
    <property type="match status" value="1"/>
</dbReference>
<dbReference type="InterPro" id="IPR029063">
    <property type="entry name" value="SAM-dependent_MTases_sf"/>
</dbReference>
<dbReference type="InterPro" id="IPR049470">
    <property type="entry name" value="TRM61_C"/>
</dbReference>
<dbReference type="InterPro" id="IPR014816">
    <property type="entry name" value="tRNA_MeTrfase_Gcd14"/>
</dbReference>
<dbReference type="PANTHER" id="PTHR12133">
    <property type="entry name" value="TRNA (ADENINE(58)-N(1))-METHYLTRANSFERASE"/>
    <property type="match status" value="1"/>
</dbReference>
<dbReference type="PANTHER" id="PTHR12133:SF1">
    <property type="entry name" value="TRNA (ADENINE(58)-N(1))-METHYLTRANSFERASE, MITOCHONDRIAL"/>
    <property type="match status" value="1"/>
</dbReference>
<dbReference type="Pfam" id="PF08704">
    <property type="entry name" value="GCD14"/>
    <property type="match status" value="1"/>
</dbReference>
<dbReference type="Pfam" id="PF14801">
    <property type="entry name" value="TrmI-like_N"/>
    <property type="match status" value="1"/>
</dbReference>
<dbReference type="PIRSF" id="PIRSF017269">
    <property type="entry name" value="GCD14"/>
    <property type="match status" value="1"/>
</dbReference>
<dbReference type="SUPFAM" id="SSF53335">
    <property type="entry name" value="S-adenosyl-L-methionine-dependent methyltransferases"/>
    <property type="match status" value="1"/>
</dbReference>
<dbReference type="PROSITE" id="PS51620">
    <property type="entry name" value="SAM_TRM61"/>
    <property type="match status" value="1"/>
</dbReference>
<protein>
    <recommendedName>
        <fullName>tRNA (adenine(58)-N(1))-methyltransferase TrmI</fullName>
        <ecNumber>2.1.1.220</ecNumber>
    </recommendedName>
    <alternativeName>
        <fullName>tRNA(m1A58)-methyltransferase</fullName>
        <shortName>tRNA(m1A58)MTase</shortName>
    </alternativeName>
</protein>
<accession>P9WFZ1</accession>
<accession>L0TA90</accession>
<accession>O33253</accession>
<accession>Q7D7H7</accession>
<proteinExistence type="evidence at protein level"/>
<gene>
    <name type="primary">trmI</name>
    <name type="ordered locus">Rv2118c</name>
</gene>